<organism>
    <name type="scientific">Neisseria meningitidis serogroup C / serotype 2a (strain ATCC 700532 / DSM 15464 / FAM18)</name>
    <dbReference type="NCBI Taxonomy" id="272831"/>
    <lineage>
        <taxon>Bacteria</taxon>
        <taxon>Pseudomonadati</taxon>
        <taxon>Pseudomonadota</taxon>
        <taxon>Betaproteobacteria</taxon>
        <taxon>Neisseriales</taxon>
        <taxon>Neisseriaceae</taxon>
        <taxon>Neisseria</taxon>
    </lineage>
</organism>
<dbReference type="EC" id="2.1.1.163" evidence="1"/>
<dbReference type="EC" id="2.1.1.201" evidence="1"/>
<dbReference type="EMBL" id="AM421808">
    <property type="protein sequence ID" value="CAM09988.1"/>
    <property type="molecule type" value="Genomic_DNA"/>
</dbReference>
<dbReference type="RefSeq" id="WP_002214049.1">
    <property type="nucleotide sequence ID" value="NC_008767.1"/>
</dbReference>
<dbReference type="SMR" id="A1KT06"/>
<dbReference type="GeneID" id="86928873"/>
<dbReference type="KEGG" id="nmc:NMC0697"/>
<dbReference type="HOGENOM" id="CLU_037990_0_0_4"/>
<dbReference type="UniPathway" id="UPA00079">
    <property type="reaction ID" value="UER00169"/>
</dbReference>
<dbReference type="UniPathway" id="UPA00232"/>
<dbReference type="Proteomes" id="UP000002286">
    <property type="component" value="Chromosome"/>
</dbReference>
<dbReference type="GO" id="GO:0008425">
    <property type="term" value="F:2-methoxy-6-polyprenyl-1,4-benzoquinol methyltransferase activity"/>
    <property type="evidence" value="ECO:0007669"/>
    <property type="project" value="UniProtKB-UniRule"/>
</dbReference>
<dbReference type="GO" id="GO:0043770">
    <property type="term" value="F:demethylmenaquinone methyltransferase activity"/>
    <property type="evidence" value="ECO:0007669"/>
    <property type="project" value="UniProtKB-UniRule"/>
</dbReference>
<dbReference type="GO" id="GO:0009060">
    <property type="term" value="P:aerobic respiration"/>
    <property type="evidence" value="ECO:0007669"/>
    <property type="project" value="UniProtKB-UniRule"/>
</dbReference>
<dbReference type="GO" id="GO:0009234">
    <property type="term" value="P:menaquinone biosynthetic process"/>
    <property type="evidence" value="ECO:0007669"/>
    <property type="project" value="UniProtKB-UniRule"/>
</dbReference>
<dbReference type="GO" id="GO:0032259">
    <property type="term" value="P:methylation"/>
    <property type="evidence" value="ECO:0007669"/>
    <property type="project" value="UniProtKB-KW"/>
</dbReference>
<dbReference type="CDD" id="cd02440">
    <property type="entry name" value="AdoMet_MTases"/>
    <property type="match status" value="1"/>
</dbReference>
<dbReference type="Gene3D" id="3.40.50.150">
    <property type="entry name" value="Vaccinia Virus protein VP39"/>
    <property type="match status" value="1"/>
</dbReference>
<dbReference type="HAMAP" id="MF_01813">
    <property type="entry name" value="MenG_UbiE_methyltr"/>
    <property type="match status" value="1"/>
</dbReference>
<dbReference type="InterPro" id="IPR029063">
    <property type="entry name" value="SAM-dependent_MTases_sf"/>
</dbReference>
<dbReference type="InterPro" id="IPR004033">
    <property type="entry name" value="UbiE/COQ5_MeTrFase"/>
</dbReference>
<dbReference type="InterPro" id="IPR023576">
    <property type="entry name" value="UbiE/COQ5_MeTrFase_CS"/>
</dbReference>
<dbReference type="NCBIfam" id="TIGR01934">
    <property type="entry name" value="MenG_MenH_UbiE"/>
    <property type="match status" value="1"/>
</dbReference>
<dbReference type="NCBIfam" id="NF001240">
    <property type="entry name" value="PRK00216.1-1"/>
    <property type="match status" value="1"/>
</dbReference>
<dbReference type="NCBIfam" id="NF001244">
    <property type="entry name" value="PRK00216.1-5"/>
    <property type="match status" value="1"/>
</dbReference>
<dbReference type="PANTHER" id="PTHR43591:SF24">
    <property type="entry name" value="2-METHOXY-6-POLYPRENYL-1,4-BENZOQUINOL METHYLASE, MITOCHONDRIAL"/>
    <property type="match status" value="1"/>
</dbReference>
<dbReference type="PANTHER" id="PTHR43591">
    <property type="entry name" value="METHYLTRANSFERASE"/>
    <property type="match status" value="1"/>
</dbReference>
<dbReference type="Pfam" id="PF01209">
    <property type="entry name" value="Ubie_methyltran"/>
    <property type="match status" value="1"/>
</dbReference>
<dbReference type="SUPFAM" id="SSF53335">
    <property type="entry name" value="S-adenosyl-L-methionine-dependent methyltransferases"/>
    <property type="match status" value="1"/>
</dbReference>
<dbReference type="PROSITE" id="PS51608">
    <property type="entry name" value="SAM_MT_UBIE"/>
    <property type="match status" value="1"/>
</dbReference>
<dbReference type="PROSITE" id="PS01183">
    <property type="entry name" value="UBIE_1"/>
    <property type="match status" value="1"/>
</dbReference>
<dbReference type="PROSITE" id="PS01184">
    <property type="entry name" value="UBIE_2"/>
    <property type="match status" value="1"/>
</dbReference>
<name>UBIE_NEIMF</name>
<reference key="1">
    <citation type="journal article" date="2007" name="PLoS Genet.">
        <title>Meningococcal genetic variation mechanisms viewed through comparative analysis of serogroup C strain FAM18.</title>
        <authorList>
            <person name="Bentley S.D."/>
            <person name="Vernikos G.S."/>
            <person name="Snyder L.A.S."/>
            <person name="Churcher C."/>
            <person name="Arrowsmith C."/>
            <person name="Chillingworth T."/>
            <person name="Cronin A."/>
            <person name="Davis P.H."/>
            <person name="Holroyd N.E."/>
            <person name="Jagels K."/>
            <person name="Maddison M."/>
            <person name="Moule S."/>
            <person name="Rabbinowitsch E."/>
            <person name="Sharp S."/>
            <person name="Unwin L."/>
            <person name="Whitehead S."/>
            <person name="Quail M.A."/>
            <person name="Achtman M."/>
            <person name="Barrell B.G."/>
            <person name="Saunders N.J."/>
            <person name="Parkhill J."/>
        </authorList>
    </citation>
    <scope>NUCLEOTIDE SEQUENCE [LARGE SCALE GENOMIC DNA]</scope>
    <source>
        <strain>ATCC 700532 / DSM 15464 / FAM18</strain>
    </source>
</reference>
<evidence type="ECO:0000255" key="1">
    <source>
        <dbReference type="HAMAP-Rule" id="MF_01813"/>
    </source>
</evidence>
<gene>
    <name evidence="1" type="primary">ubiE</name>
    <name type="ordered locus">NMC0697</name>
</gene>
<comment type="function">
    <text evidence="1">Methyltransferase required for the conversion of demethylmenaquinol (DMKH2) to menaquinol (MKH2) and the conversion of 2-polyprenyl-6-methoxy-1,4-benzoquinol (DDMQH2) to 2-polyprenyl-3-methyl-6-methoxy-1,4-benzoquinol (DMQH2).</text>
</comment>
<comment type="catalytic activity">
    <reaction evidence="1">
        <text>a 2-demethylmenaquinol + S-adenosyl-L-methionine = a menaquinol + S-adenosyl-L-homocysteine + H(+)</text>
        <dbReference type="Rhea" id="RHEA:42640"/>
        <dbReference type="Rhea" id="RHEA-COMP:9539"/>
        <dbReference type="Rhea" id="RHEA-COMP:9563"/>
        <dbReference type="ChEBI" id="CHEBI:15378"/>
        <dbReference type="ChEBI" id="CHEBI:18151"/>
        <dbReference type="ChEBI" id="CHEBI:55437"/>
        <dbReference type="ChEBI" id="CHEBI:57856"/>
        <dbReference type="ChEBI" id="CHEBI:59789"/>
        <dbReference type="EC" id="2.1.1.163"/>
    </reaction>
</comment>
<comment type="catalytic activity">
    <reaction evidence="1">
        <text>a 2-methoxy-6-(all-trans-polyprenyl)benzene-1,4-diol + S-adenosyl-L-methionine = a 5-methoxy-2-methyl-3-(all-trans-polyprenyl)benzene-1,4-diol + S-adenosyl-L-homocysteine + H(+)</text>
        <dbReference type="Rhea" id="RHEA:28286"/>
        <dbReference type="Rhea" id="RHEA-COMP:10858"/>
        <dbReference type="Rhea" id="RHEA-COMP:10859"/>
        <dbReference type="ChEBI" id="CHEBI:15378"/>
        <dbReference type="ChEBI" id="CHEBI:57856"/>
        <dbReference type="ChEBI" id="CHEBI:59789"/>
        <dbReference type="ChEBI" id="CHEBI:84166"/>
        <dbReference type="ChEBI" id="CHEBI:84167"/>
        <dbReference type="EC" id="2.1.1.201"/>
    </reaction>
</comment>
<comment type="pathway">
    <text evidence="1">Quinol/quinone metabolism; menaquinone biosynthesis; menaquinol from 1,4-dihydroxy-2-naphthoate: step 2/2.</text>
</comment>
<comment type="pathway">
    <text evidence="1">Cofactor biosynthesis; ubiquinone biosynthesis.</text>
</comment>
<comment type="similarity">
    <text evidence="1">Belongs to the class I-like SAM-binding methyltransferase superfamily. MenG/UbiE family.</text>
</comment>
<proteinExistence type="inferred from homology"/>
<feature type="chain" id="PRO_1000056266" description="Ubiquinone/menaquinone biosynthesis C-methyltransferase UbiE">
    <location>
        <begin position="1"/>
        <end position="245"/>
    </location>
</feature>
<feature type="binding site" evidence="1">
    <location>
        <position position="71"/>
    </location>
    <ligand>
        <name>S-adenosyl-L-methionine</name>
        <dbReference type="ChEBI" id="CHEBI:59789"/>
    </ligand>
</feature>
<feature type="binding site" evidence="1">
    <location>
        <position position="92"/>
    </location>
    <ligand>
        <name>S-adenosyl-L-methionine</name>
        <dbReference type="ChEBI" id="CHEBI:59789"/>
    </ligand>
</feature>
<feature type="binding site" evidence="1">
    <location>
        <begin position="118"/>
        <end position="119"/>
    </location>
    <ligand>
        <name>S-adenosyl-L-methionine</name>
        <dbReference type="ChEBI" id="CHEBI:59789"/>
    </ligand>
</feature>
<sequence length="245" mass="27324">MGGQKTHFGFSTVNEDEKAGKVAEVFHSVAKNYDIMNDVMSAGLHRVWKHFTINTAHLKKGDKVLDIAGGTGDLSRGWAKRVGKEGEVWLTDINSSMLTVGRDRLLNEGMILPVSLADAEKLPFPDNYFNLVSVAFGLRNMTHKDAALKEMYRVLKPGGTLLVLEFSKIYKPLEGAYDFYSFKLLPVMGKLIAKDADSYQYLAESIRMHPDQETLKQMMLDAGFDSVDYHNMSAGIVALHKGVKF</sequence>
<accession>A1KT06</accession>
<protein>
    <recommendedName>
        <fullName evidence="1">Ubiquinone/menaquinone biosynthesis C-methyltransferase UbiE</fullName>
        <ecNumber evidence="1">2.1.1.163</ecNumber>
        <ecNumber evidence="1">2.1.1.201</ecNumber>
    </recommendedName>
    <alternativeName>
        <fullName evidence="1">2-methoxy-6-polyprenyl-1,4-benzoquinol methylase</fullName>
    </alternativeName>
    <alternativeName>
        <fullName evidence="1">Demethylmenaquinone methyltransferase</fullName>
    </alternativeName>
</protein>
<keyword id="KW-0474">Menaquinone biosynthesis</keyword>
<keyword id="KW-0489">Methyltransferase</keyword>
<keyword id="KW-0949">S-adenosyl-L-methionine</keyword>
<keyword id="KW-0808">Transferase</keyword>
<keyword id="KW-0831">Ubiquinone biosynthesis</keyword>